<organism>
    <name type="scientific">Saccharomyces cerevisiae (strain Zymaflore VL3)</name>
    <name type="common">Baker's yeast</name>
    <dbReference type="NCBI Taxonomy" id="764100"/>
    <lineage>
        <taxon>Eukaryota</taxon>
        <taxon>Fungi</taxon>
        <taxon>Dikarya</taxon>
        <taxon>Ascomycota</taxon>
        <taxon>Saccharomycotina</taxon>
        <taxon>Saccharomycetes</taxon>
        <taxon>Saccharomycetales</taxon>
        <taxon>Saccharomycetaceae</taxon>
        <taxon>Saccharomyces</taxon>
    </lineage>
</organism>
<gene>
    <name type="primary">GEP3</name>
    <name type="synonym">AIM40</name>
    <name type="synonym">FMP48</name>
    <name type="ORF">VL3_4555</name>
</gene>
<feature type="transit peptide" description="Mitochondrion" evidence="2">
    <location>
        <begin position="1"/>
        <end position="21"/>
    </location>
</feature>
<feature type="chain" id="PRO_0000409648" description="Genetic interactor of prohibitins 3, mitochondrial">
    <location>
        <begin position="22"/>
        <end position="556"/>
    </location>
</feature>
<feature type="domain" description="CP-type G" evidence="3">
    <location>
        <begin position="113"/>
        <end position="305"/>
    </location>
</feature>
<evidence type="ECO:0000250" key="1"/>
<evidence type="ECO:0000255" key="2"/>
<evidence type="ECO:0000255" key="3">
    <source>
        <dbReference type="PROSITE-ProRule" id="PRU01058"/>
    </source>
</evidence>
<accession>E7QKV3</accession>
<keyword id="KW-0496">Mitochondrion</keyword>
<keyword id="KW-0809">Transit peptide</keyword>
<protein>
    <recommendedName>
        <fullName>Genetic interactor of prohibitins 3, mitochondrial</fullName>
    </recommendedName>
    <alternativeName>
        <fullName>Altered inheritance of mitochondria protein 40</fullName>
    </alternativeName>
    <alternativeName>
        <fullName>Found in mitochondrial proteome protein 38</fullName>
    </alternativeName>
</protein>
<proteinExistence type="inferred from homology"/>
<dbReference type="EMBL" id="AEJS01000062">
    <property type="protein sequence ID" value="EGA84677.1"/>
    <property type="molecule type" value="Genomic_DNA"/>
</dbReference>
<dbReference type="HOGENOM" id="CLU_025792_1_0_1"/>
<dbReference type="OrthoDB" id="1696305at2759"/>
<dbReference type="GO" id="GO:0005739">
    <property type="term" value="C:mitochondrion"/>
    <property type="evidence" value="ECO:0007669"/>
    <property type="project" value="UniProtKB-SubCell"/>
</dbReference>
<dbReference type="GO" id="GO:0005525">
    <property type="term" value="F:GTP binding"/>
    <property type="evidence" value="ECO:0007669"/>
    <property type="project" value="InterPro"/>
</dbReference>
<dbReference type="CDD" id="cd01855">
    <property type="entry name" value="YqeH"/>
    <property type="match status" value="1"/>
</dbReference>
<dbReference type="Gene3D" id="3.40.50.300">
    <property type="entry name" value="P-loop containing nucleotide triphosphate hydrolases"/>
    <property type="match status" value="1"/>
</dbReference>
<dbReference type="InterPro" id="IPR030378">
    <property type="entry name" value="G_CP_dom"/>
</dbReference>
<dbReference type="InterPro" id="IPR006073">
    <property type="entry name" value="GTP-bd"/>
</dbReference>
<dbReference type="InterPro" id="IPR050896">
    <property type="entry name" value="Mito_lipid_metab_GTPase"/>
</dbReference>
<dbReference type="InterPro" id="IPR027417">
    <property type="entry name" value="P-loop_NTPase"/>
</dbReference>
<dbReference type="PANTHER" id="PTHR46434">
    <property type="entry name" value="GENETIC INTERACTOR OF PROHIBITINS 3, MITOCHONDRIAL"/>
    <property type="match status" value="1"/>
</dbReference>
<dbReference type="PANTHER" id="PTHR46434:SF1">
    <property type="entry name" value="GENETIC INTERACTOR OF PROHIBITINS 3, MITOCHONDRIAL"/>
    <property type="match status" value="1"/>
</dbReference>
<dbReference type="Pfam" id="PF01926">
    <property type="entry name" value="MMR_HSR1"/>
    <property type="match status" value="1"/>
</dbReference>
<dbReference type="SUPFAM" id="SSF52540">
    <property type="entry name" value="P-loop containing nucleoside triphosphate hydrolases"/>
    <property type="match status" value="1"/>
</dbReference>
<dbReference type="PROSITE" id="PS51721">
    <property type="entry name" value="G_CP"/>
    <property type="match status" value="1"/>
</dbReference>
<comment type="function">
    <text evidence="1">Interacts genetically with prohibitins and thus may be involved in the mitochondrial lipid metabolism.</text>
</comment>
<comment type="subcellular location">
    <subcellularLocation>
        <location evidence="1">Mitochondrion</location>
    </subcellularLocation>
</comment>
<comment type="similarity">
    <text evidence="3">Belongs to the TRAFAC class YlqF/YawG GTPase family. GEP3 subfamily.</text>
</comment>
<sequence length="556" mass="63860">MLNLCHALRGVRQFSCSVIVKVKCASCSIKLQDQDPSKPGYYTKPKSLPDSKLNPDLQDLKYLLFSQDIQLSKQAIQNDPDLKTKRDLLLRVICKRCSNALHHNNYNPEEFPESTLNDILNYVPRGSNVMHIVPFVEFPLHLDPNVLKRNDLDTTLVLTKSDQVFKDKNAVSKKVPIFMKQFLKNTLRIDSNKTFAISALKNWNISMFYNYFKNYTYLLGNPNVGKSTLINTLLQKYLGYKVKIDSTGKINSPSEEVMQEAFTNPKNFFKIQAAGVSHIPNLTRSVQAYQVGGKILFDLPGYSTSTSRLRLEEPIDERWLQRLRKTDLFNRKHIKQKTYESMKGTSQGGCYTVGGIFYLVPPKGSINQIVKYIPGPSKTFKNIEKGIDVFNSCNSSSGTHPLSRYCGIKSVICEKSQYKRYAIPPFIGSIEIVLKDIGYILLRTTGRYEFKGLHEIWIPRGIQVGIREPLENLIESGYRRYIETNGKESSCPRDRPIISSLYEMAPDEADTLNAVKKSYLEKTEKDLSARRFVDDDPYDLVQHLXKKKNPYWYYQW</sequence>
<reference key="1">
    <citation type="journal article" date="2011" name="PLoS Genet.">
        <title>Whole-genome comparison reveals novel genetic elements that characterize the genome of industrial strains of Saccharomyces cerevisiae.</title>
        <authorList>
            <person name="Borneman A.R."/>
            <person name="Desany B.A."/>
            <person name="Riches D."/>
            <person name="Affourtit J.P."/>
            <person name="Forgan A.H."/>
            <person name="Pretorius I.S."/>
            <person name="Egholm M."/>
            <person name="Chambers P.J."/>
        </authorList>
    </citation>
    <scope>NUCLEOTIDE SEQUENCE [LARGE SCALE GENOMIC DNA]</scope>
    <source>
        <strain>Zymaflore VL3</strain>
    </source>
</reference>
<name>GEP3_YEASZ</name>